<reference key="1">
    <citation type="journal article" date="2011" name="Environ. Microbiol.">
        <title>Genome of alkaliphilic Bacillus pseudofirmus OF4 reveals adaptations that support the ability to grow in an external pH range from 7.5 to 11.4.</title>
        <authorList>
            <person name="Janto B."/>
            <person name="Ahmed A."/>
            <person name="Ito M."/>
            <person name="Liu J."/>
            <person name="Hicks D.B."/>
            <person name="Pagni S."/>
            <person name="Fackelmayer O.J."/>
            <person name="Smith T.A."/>
            <person name="Earl J."/>
            <person name="Elbourne L.D."/>
            <person name="Hassan K."/>
            <person name="Paulsen I.T."/>
            <person name="Kolsto A.B."/>
            <person name="Tourasse N.J."/>
            <person name="Ehrlich G.D."/>
            <person name="Boissy R."/>
            <person name="Ivey D.M."/>
            <person name="Li G."/>
            <person name="Xue Y."/>
            <person name="Ma Y."/>
            <person name="Hu F.Z."/>
            <person name="Krulwich T.A."/>
        </authorList>
    </citation>
    <scope>NUCLEOTIDE SEQUENCE [LARGE SCALE GENOMIC DNA]</scope>
    <source>
        <strain>ATCC BAA-2126 / JCM 17055 / OF4</strain>
    </source>
</reference>
<sequence>MQDIKQRDIEHVILVGCQVNREDEEFEQSIAELESLAKTAKGKVVGTITQKREKVESSTYVGKGKVQELVHLIEETEADLVIFNDELQASQMRNLHAECGIAVIDRTQLILDIFASRAKSREGKLQVELAQLKYLLPRLSGQGLALSRQGGGIGTRGPGETQLETDRRHIRRRMNEIERQLEAVVNHRVRYREKRKKNAAIQLALVGYTNAGKSTLLNRLTKADTLEEDQLFATLDPTTRQLHLPSGFSVLMSDTVGFIQDLPTTLVASFRSTLEELKEADLLLHVVDCSHPDYEQHERTVIKLIEELEAHSIPQLLIYNKADQKTDVFIPTHTKDSIIMSAYNEEDLLALKVKIEQALKGMMMPYRSIIKADEGHILAAARQETMIHTQQFDESREAYVIEGHALENTSIYSQLKERLLKES</sequence>
<accession>D3FTV4</accession>
<feature type="chain" id="PRO_0000412654" description="GTPase HflX">
    <location>
        <begin position="1"/>
        <end position="423"/>
    </location>
</feature>
<feature type="domain" description="Hflx-type G" evidence="1">
    <location>
        <begin position="201"/>
        <end position="363"/>
    </location>
</feature>
<feature type="binding site" evidence="1">
    <location>
        <begin position="207"/>
        <end position="214"/>
    </location>
    <ligand>
        <name>GTP</name>
        <dbReference type="ChEBI" id="CHEBI:37565"/>
    </ligand>
</feature>
<feature type="binding site" evidence="1">
    <location>
        <position position="214"/>
    </location>
    <ligand>
        <name>Mg(2+)</name>
        <dbReference type="ChEBI" id="CHEBI:18420"/>
    </ligand>
</feature>
<feature type="binding site" evidence="1">
    <location>
        <begin position="232"/>
        <end position="236"/>
    </location>
    <ligand>
        <name>GTP</name>
        <dbReference type="ChEBI" id="CHEBI:37565"/>
    </ligand>
</feature>
<feature type="binding site" evidence="1">
    <location>
        <position position="234"/>
    </location>
    <ligand>
        <name>Mg(2+)</name>
        <dbReference type="ChEBI" id="CHEBI:18420"/>
    </ligand>
</feature>
<feature type="binding site" evidence="1">
    <location>
        <begin position="254"/>
        <end position="257"/>
    </location>
    <ligand>
        <name>GTP</name>
        <dbReference type="ChEBI" id="CHEBI:37565"/>
    </ligand>
</feature>
<feature type="binding site" evidence="1">
    <location>
        <begin position="320"/>
        <end position="323"/>
    </location>
    <ligand>
        <name>GTP</name>
        <dbReference type="ChEBI" id="CHEBI:37565"/>
    </ligand>
</feature>
<feature type="binding site" evidence="1">
    <location>
        <begin position="341"/>
        <end position="343"/>
    </location>
    <ligand>
        <name>GTP</name>
        <dbReference type="ChEBI" id="CHEBI:37565"/>
    </ligand>
</feature>
<organism>
    <name type="scientific">Alkalihalophilus pseudofirmus (strain ATCC BAA-2126 / JCM 17055 / OF4)</name>
    <name type="common">Bacillus pseudofirmus</name>
    <dbReference type="NCBI Taxonomy" id="398511"/>
    <lineage>
        <taxon>Bacteria</taxon>
        <taxon>Bacillati</taxon>
        <taxon>Bacillota</taxon>
        <taxon>Bacilli</taxon>
        <taxon>Bacillales</taxon>
        <taxon>Bacillaceae</taxon>
        <taxon>Alkalihalophilus</taxon>
    </lineage>
</organism>
<keyword id="KW-0963">Cytoplasm</keyword>
<keyword id="KW-0342">GTP-binding</keyword>
<keyword id="KW-0460">Magnesium</keyword>
<keyword id="KW-0479">Metal-binding</keyword>
<keyword id="KW-0547">Nucleotide-binding</keyword>
<keyword id="KW-1185">Reference proteome</keyword>
<gene>
    <name evidence="1" type="primary">hflX</name>
    <name type="ordered locus">BpOF4_19480</name>
</gene>
<dbReference type="EMBL" id="CP001878">
    <property type="protein sequence ID" value="ADC51935.1"/>
    <property type="molecule type" value="Genomic_DNA"/>
</dbReference>
<dbReference type="RefSeq" id="WP_012959297.1">
    <property type="nucleotide sequence ID" value="NC_013791.2"/>
</dbReference>
<dbReference type="SMR" id="D3FTV4"/>
<dbReference type="STRING" id="398511.BpOF4_19480"/>
<dbReference type="KEGG" id="bpf:BpOF4_19480"/>
<dbReference type="eggNOG" id="COG2262">
    <property type="taxonomic scope" value="Bacteria"/>
</dbReference>
<dbReference type="HOGENOM" id="CLU_019597_2_2_9"/>
<dbReference type="Proteomes" id="UP000001544">
    <property type="component" value="Chromosome"/>
</dbReference>
<dbReference type="GO" id="GO:0005737">
    <property type="term" value="C:cytoplasm"/>
    <property type="evidence" value="ECO:0007669"/>
    <property type="project" value="UniProtKB-SubCell"/>
</dbReference>
<dbReference type="GO" id="GO:0005525">
    <property type="term" value="F:GTP binding"/>
    <property type="evidence" value="ECO:0007669"/>
    <property type="project" value="UniProtKB-UniRule"/>
</dbReference>
<dbReference type="GO" id="GO:0003924">
    <property type="term" value="F:GTPase activity"/>
    <property type="evidence" value="ECO:0007669"/>
    <property type="project" value="UniProtKB-UniRule"/>
</dbReference>
<dbReference type="GO" id="GO:0046872">
    <property type="term" value="F:metal ion binding"/>
    <property type="evidence" value="ECO:0007669"/>
    <property type="project" value="UniProtKB-KW"/>
</dbReference>
<dbReference type="GO" id="GO:0043022">
    <property type="term" value="F:ribosome binding"/>
    <property type="evidence" value="ECO:0007669"/>
    <property type="project" value="TreeGrafter"/>
</dbReference>
<dbReference type="CDD" id="cd01878">
    <property type="entry name" value="HflX"/>
    <property type="match status" value="1"/>
</dbReference>
<dbReference type="FunFam" id="3.40.50.11060:FF:000001">
    <property type="entry name" value="GTPase HflX"/>
    <property type="match status" value="1"/>
</dbReference>
<dbReference type="FunFam" id="3.40.50.300:FF:000173">
    <property type="entry name" value="GTPase HflX"/>
    <property type="match status" value="1"/>
</dbReference>
<dbReference type="Gene3D" id="6.10.250.2860">
    <property type="match status" value="1"/>
</dbReference>
<dbReference type="Gene3D" id="3.40.50.11060">
    <property type="entry name" value="GTPase HflX, N-terminal domain"/>
    <property type="match status" value="1"/>
</dbReference>
<dbReference type="Gene3D" id="3.40.50.300">
    <property type="entry name" value="P-loop containing nucleotide triphosphate hydrolases"/>
    <property type="match status" value="1"/>
</dbReference>
<dbReference type="HAMAP" id="MF_00900">
    <property type="entry name" value="GTPase_HflX"/>
    <property type="match status" value="1"/>
</dbReference>
<dbReference type="InterPro" id="IPR030394">
    <property type="entry name" value="G_HFLX_dom"/>
</dbReference>
<dbReference type="InterPro" id="IPR006073">
    <property type="entry name" value="GTP-bd"/>
</dbReference>
<dbReference type="InterPro" id="IPR032305">
    <property type="entry name" value="GTP-bd_M"/>
</dbReference>
<dbReference type="InterPro" id="IPR016496">
    <property type="entry name" value="GTPase_HflX"/>
</dbReference>
<dbReference type="InterPro" id="IPR025121">
    <property type="entry name" value="GTPase_HflX_N"/>
</dbReference>
<dbReference type="InterPro" id="IPR042108">
    <property type="entry name" value="GTPase_HflX_N_sf"/>
</dbReference>
<dbReference type="InterPro" id="IPR027417">
    <property type="entry name" value="P-loop_NTPase"/>
</dbReference>
<dbReference type="InterPro" id="IPR005225">
    <property type="entry name" value="Small_GTP-bd"/>
</dbReference>
<dbReference type="NCBIfam" id="TIGR03156">
    <property type="entry name" value="GTP_HflX"/>
    <property type="match status" value="1"/>
</dbReference>
<dbReference type="NCBIfam" id="TIGR00231">
    <property type="entry name" value="small_GTP"/>
    <property type="match status" value="1"/>
</dbReference>
<dbReference type="PANTHER" id="PTHR10229:SF0">
    <property type="entry name" value="GTP-BINDING PROTEIN 6-RELATED"/>
    <property type="match status" value="1"/>
</dbReference>
<dbReference type="PANTHER" id="PTHR10229">
    <property type="entry name" value="GTP-BINDING PROTEIN HFLX"/>
    <property type="match status" value="1"/>
</dbReference>
<dbReference type="Pfam" id="PF16360">
    <property type="entry name" value="GTP-bdg_M"/>
    <property type="match status" value="1"/>
</dbReference>
<dbReference type="Pfam" id="PF13167">
    <property type="entry name" value="GTP-bdg_N"/>
    <property type="match status" value="1"/>
</dbReference>
<dbReference type="Pfam" id="PF01926">
    <property type="entry name" value="MMR_HSR1"/>
    <property type="match status" value="1"/>
</dbReference>
<dbReference type="PIRSF" id="PIRSF006809">
    <property type="entry name" value="GTP-binding_hflX_prd"/>
    <property type="match status" value="1"/>
</dbReference>
<dbReference type="PRINTS" id="PR00326">
    <property type="entry name" value="GTP1OBG"/>
</dbReference>
<dbReference type="SUPFAM" id="SSF52540">
    <property type="entry name" value="P-loop containing nucleoside triphosphate hydrolases"/>
    <property type="match status" value="1"/>
</dbReference>
<dbReference type="PROSITE" id="PS51705">
    <property type="entry name" value="G_HFLX"/>
    <property type="match status" value="1"/>
</dbReference>
<comment type="function">
    <text evidence="1">GTPase that associates with the 50S ribosomal subunit and may have a role during protein synthesis or ribosome biogenesis.</text>
</comment>
<comment type="cofactor">
    <cofactor evidence="1">
        <name>Mg(2+)</name>
        <dbReference type="ChEBI" id="CHEBI:18420"/>
    </cofactor>
</comment>
<comment type="subunit">
    <text evidence="1">Monomer. Associates with the 50S ribosomal subunit.</text>
</comment>
<comment type="subcellular location">
    <subcellularLocation>
        <location evidence="1">Cytoplasm</location>
    </subcellularLocation>
    <text evidence="1">May associate with membranes.</text>
</comment>
<comment type="similarity">
    <text evidence="1">Belongs to the TRAFAC class OBG-HflX-like GTPase superfamily. HflX GTPase family.</text>
</comment>
<protein>
    <recommendedName>
        <fullName evidence="1">GTPase HflX</fullName>
    </recommendedName>
    <alternativeName>
        <fullName evidence="1">GTP-binding protein HflX</fullName>
    </alternativeName>
</protein>
<name>HFLX_ALKPO</name>
<proteinExistence type="inferred from homology"/>
<evidence type="ECO:0000255" key="1">
    <source>
        <dbReference type="HAMAP-Rule" id="MF_00900"/>
    </source>
</evidence>